<evidence type="ECO:0000255" key="1">
    <source>
        <dbReference type="HAMAP-Rule" id="MF_00402"/>
    </source>
</evidence>
<evidence type="ECO:0000305" key="2"/>
<comment type="function">
    <text evidence="1">This protein is located at the 30S-50S ribosomal subunit interface and may play a role in the structure and function of the aminoacyl-tRNA binding site.</text>
</comment>
<comment type="similarity">
    <text evidence="1">Belongs to the bacterial ribosomal protein bL19 family.</text>
</comment>
<feature type="chain" id="PRO_1000193856" description="Large ribosomal subunit protein bL19">
    <location>
        <begin position="1"/>
        <end position="119"/>
    </location>
</feature>
<organism>
    <name type="scientific">Limosilactobacillus reuteri subsp. reuteri (strain JCM 1112)</name>
    <name type="common">Lactobacillus reuteri</name>
    <dbReference type="NCBI Taxonomy" id="557433"/>
    <lineage>
        <taxon>Bacteria</taxon>
        <taxon>Bacillati</taxon>
        <taxon>Bacillota</taxon>
        <taxon>Bacilli</taxon>
        <taxon>Lactobacillales</taxon>
        <taxon>Lactobacillaceae</taxon>
        <taxon>Limosilactobacillus</taxon>
    </lineage>
</organism>
<dbReference type="EMBL" id="AP007281">
    <property type="protein sequence ID" value="BAG25598.1"/>
    <property type="molecule type" value="Genomic_DNA"/>
</dbReference>
<dbReference type="RefSeq" id="WP_003675625.1">
    <property type="nucleotide sequence ID" value="NC_010609.1"/>
</dbReference>
<dbReference type="SMR" id="B2G816"/>
<dbReference type="GeneID" id="77191818"/>
<dbReference type="KEGG" id="lrf:LAR_1082"/>
<dbReference type="HOGENOM" id="CLU_103507_2_1_9"/>
<dbReference type="GO" id="GO:0022625">
    <property type="term" value="C:cytosolic large ribosomal subunit"/>
    <property type="evidence" value="ECO:0007669"/>
    <property type="project" value="TreeGrafter"/>
</dbReference>
<dbReference type="GO" id="GO:0003735">
    <property type="term" value="F:structural constituent of ribosome"/>
    <property type="evidence" value="ECO:0007669"/>
    <property type="project" value="InterPro"/>
</dbReference>
<dbReference type="GO" id="GO:0006412">
    <property type="term" value="P:translation"/>
    <property type="evidence" value="ECO:0007669"/>
    <property type="project" value="UniProtKB-UniRule"/>
</dbReference>
<dbReference type="FunFam" id="2.30.30.790:FF:000001">
    <property type="entry name" value="50S ribosomal protein L19"/>
    <property type="match status" value="1"/>
</dbReference>
<dbReference type="Gene3D" id="2.30.30.790">
    <property type="match status" value="1"/>
</dbReference>
<dbReference type="HAMAP" id="MF_00402">
    <property type="entry name" value="Ribosomal_bL19"/>
    <property type="match status" value="1"/>
</dbReference>
<dbReference type="InterPro" id="IPR001857">
    <property type="entry name" value="Ribosomal_bL19"/>
</dbReference>
<dbReference type="InterPro" id="IPR018257">
    <property type="entry name" value="Ribosomal_bL19_CS"/>
</dbReference>
<dbReference type="InterPro" id="IPR038657">
    <property type="entry name" value="Ribosomal_bL19_sf"/>
</dbReference>
<dbReference type="InterPro" id="IPR008991">
    <property type="entry name" value="Translation_prot_SH3-like_sf"/>
</dbReference>
<dbReference type="NCBIfam" id="TIGR01024">
    <property type="entry name" value="rplS_bact"/>
    <property type="match status" value="1"/>
</dbReference>
<dbReference type="PANTHER" id="PTHR15680:SF9">
    <property type="entry name" value="LARGE RIBOSOMAL SUBUNIT PROTEIN BL19M"/>
    <property type="match status" value="1"/>
</dbReference>
<dbReference type="PANTHER" id="PTHR15680">
    <property type="entry name" value="RIBOSOMAL PROTEIN L19"/>
    <property type="match status" value="1"/>
</dbReference>
<dbReference type="Pfam" id="PF01245">
    <property type="entry name" value="Ribosomal_L19"/>
    <property type="match status" value="1"/>
</dbReference>
<dbReference type="PIRSF" id="PIRSF002191">
    <property type="entry name" value="Ribosomal_L19"/>
    <property type="match status" value="1"/>
</dbReference>
<dbReference type="PRINTS" id="PR00061">
    <property type="entry name" value="RIBOSOMALL19"/>
</dbReference>
<dbReference type="SUPFAM" id="SSF50104">
    <property type="entry name" value="Translation proteins SH3-like domain"/>
    <property type="match status" value="1"/>
</dbReference>
<dbReference type="PROSITE" id="PS01015">
    <property type="entry name" value="RIBOSOMAL_L19"/>
    <property type="match status" value="1"/>
</dbReference>
<proteinExistence type="inferred from homology"/>
<name>RL19_LIMRJ</name>
<keyword id="KW-0687">Ribonucleoprotein</keyword>
<keyword id="KW-0689">Ribosomal protein</keyword>
<accession>B2G816</accession>
<sequence>MRQNKLIEKITASQLRDDIPEFRAGDTVRVHARIVEGSRERIQMFEGVVIKRHGAGISATYTVRKISNGVGVERTFPVHSPRVDKIDVLRYGRVRRAKLYYLRERTGKATRIAERRRDN</sequence>
<gene>
    <name evidence="1" type="primary">rplS</name>
    <name type="ordered locus">LAR_1082</name>
</gene>
<reference key="1">
    <citation type="journal article" date="2008" name="DNA Res.">
        <title>Comparative genome analysis of Lactobacillus reuteri and Lactobacillus fermentum reveal a genomic island for reuterin and cobalamin production.</title>
        <authorList>
            <person name="Morita H."/>
            <person name="Toh H."/>
            <person name="Fukuda S."/>
            <person name="Horikawa H."/>
            <person name="Oshima K."/>
            <person name="Suzuki T."/>
            <person name="Murakami M."/>
            <person name="Hisamatsu S."/>
            <person name="Kato Y."/>
            <person name="Takizawa T."/>
            <person name="Fukuoka H."/>
            <person name="Yoshimura T."/>
            <person name="Itoh K."/>
            <person name="O'Sullivan D.J."/>
            <person name="McKay L.L."/>
            <person name="Ohno H."/>
            <person name="Kikuchi J."/>
            <person name="Masaoka T."/>
            <person name="Hattori M."/>
        </authorList>
    </citation>
    <scope>NUCLEOTIDE SEQUENCE [LARGE SCALE GENOMIC DNA]</scope>
    <source>
        <strain>JCM 1112</strain>
    </source>
</reference>
<protein>
    <recommendedName>
        <fullName evidence="1">Large ribosomal subunit protein bL19</fullName>
    </recommendedName>
    <alternativeName>
        <fullName evidence="2">50S ribosomal protein L19</fullName>
    </alternativeName>
</protein>